<comment type="function">
    <text evidence="4 5 6 7 8">Contributes to the neddylation of all cullins by transferring NEDD8 from N-terminally acetylated NEDD8-conjugating E2s enzyme to different cullin C-terminal domain-RBX complexes which is necessary for the activation of cullin-RING E3 ubiquitin ligases (CRLs) (PubMed:19617556, PubMed:23201271, PubMed:26906416). May play a role in DNA damage response and may participate in cell proliferation and anchorage-independent cell growth (PubMed:23098533, PubMed:24192928).</text>
</comment>
<comment type="subunit">
    <text evidence="6 7 8">Part of a complex that contains DCUN1D5, CUL1 and RBX1; this interaction is bridged by CUL1 (PubMed:24192928, PubMed:26906416). Interacts (via the DCUN1 domain) with the unneddylated cullins: interacts with CUL1, CUL2, CUL3, CUL4A, CUL4B and CUL5; these interactions promote the cullin neddylation and the identity of the cullin dictates the affinity of the interaction (PubMed:23201271, PubMed:24192928, PubMed:26906416). Interacts (via DCUN1 domain) with UBE2M (N-terminally acetylated form) and probably with UBE2F (N-terminally acetylated form) (PubMed:23201271, PubMed:24192928). May also interact with regulators or subunits of cullin-RING ligases such as RBX1, RNF7, ELOB and DDB1; these interactions are bridged by cullins (PubMed:26906416). Interacts with CAND1; this interaction is bridged by cullins and strongly inhibits the neddylation of cullins. These CAND-cullin-DCNL complexes can only be neddylated in the presence of a substrate adapter (PubMed:24192928, PubMed:26906416).</text>
</comment>
<comment type="interaction">
    <interactant intactId="EBI-3924013">
        <id>Q9BTE7</id>
    </interactant>
    <interactant intactId="EBI-356015">
        <id>Q14204</id>
        <label>DYNC1H1</label>
    </interactant>
    <organismsDiffer>false</organismsDiffer>
    <experiments>3</experiments>
</comment>
<comment type="interaction">
    <interactant intactId="EBI-3924013">
        <id>Q9BTE7</id>
    </interactant>
    <interactant intactId="EBI-1056174">
        <id>O60921</id>
        <label>HUS1</label>
    </interactant>
    <organismsDiffer>false</organismsDiffer>
    <experiments>5</experiments>
</comment>
<comment type="interaction">
    <interactant intactId="EBI-3924013">
        <id>Q9BTE7</id>
    </interactant>
    <interactant intactId="EBI-2432309">
        <id>Q92876</id>
        <label>KLK6</label>
    </interactant>
    <organismsDiffer>false</organismsDiffer>
    <experiments>3</experiments>
</comment>
<comment type="interaction">
    <interactant intactId="EBI-3924013">
        <id>Q9BTE7</id>
    </interactant>
    <interactant intactId="EBI-739832">
        <id>Q8TBB1</id>
        <label>LNX1</label>
    </interactant>
    <organismsDiffer>false</organismsDiffer>
    <experiments>3</experiments>
</comment>
<comment type="interaction">
    <interactant intactId="EBI-3924013">
        <id>Q9BTE7</id>
    </interactant>
    <interactant intactId="EBI-79165">
        <id>Q9NRD5</id>
        <label>PICK1</label>
    </interactant>
    <organismsDiffer>false</organismsDiffer>
    <experiments>3</experiments>
</comment>
<comment type="interaction">
    <interactant intactId="EBI-3924013">
        <id>Q9BTE7</id>
    </interactant>
    <interactant intactId="EBI-949255">
        <id>Q58EX7</id>
        <label>PLEKHG4</label>
    </interactant>
    <organismsDiffer>false</organismsDiffer>
    <experiments>3</experiments>
</comment>
<comment type="subcellular location">
    <subcellularLocation>
        <location evidence="3 5 8">Nucleus</location>
    </subcellularLocation>
    <subcellularLocation>
        <location evidence="3">Cytoplasm</location>
        <location evidence="3">Cytoskeleton</location>
        <location evidence="3">Spindle</location>
    </subcellularLocation>
    <text evidence="8">Subcellular localization is independent of the interaction with cullins.</text>
</comment>
<comment type="tissue specificity">
    <text evidence="8">Weakly expressed in testis, skin and immune tissues (thymus, spleen and lymph nodes).</text>
</comment>
<comment type="induction">
    <text evidence="5">Expression is decreased in a time-dependent manner after UVC exposure.</text>
</comment>
<comment type="domain">
    <text evidence="6 7">The DCUN1 domain, also known as PONY domain, mediates the interaction with different cullins (PubMed:23201271, PubMed:24192928). The DCUN1 domain mediates the interaction with the N-terminally acetylated NEDD8-conjugating E2s enzyme leading to the NEDD8 transfer from N-terminally acetylated NEDD8-conjugating E2s enzyme to different cullin C-terminal domain-RBX complexes; the neddylation efficiency correlates with the DCUN1D5-cullin and DCUN1D5-E2 interaction affinities (PubMed:23201271).</text>
</comment>
<comment type="PTM">
    <text evidence="1 9">Phosphorylation at Ser-41 is independent of cullin's interaction. Phosphorylated in response to both TICAM1 and MYD88 dependent Toll-like receptor (TLR) pathway activation (By similarity). Phosphorylated in response to IL1B stimulation (PubMed:29958295).</text>
</comment>
<comment type="sequence caution" evidence="12">
    <conflict type="frameshift">
        <sequence resource="EMBL-CDS" id="AAQ76805"/>
    </conflict>
</comment>
<dbReference type="EMBL" id="AK056993">
    <property type="protein sequence ID" value="BAB71336.1"/>
    <property type="molecule type" value="mRNA"/>
</dbReference>
<dbReference type="EMBL" id="BC004169">
    <property type="protein sequence ID" value="AAH04169.1"/>
    <property type="molecule type" value="mRNA"/>
</dbReference>
<dbReference type="EMBL" id="AY364246">
    <property type="protein sequence ID" value="AAQ76805.1"/>
    <property type="status" value="ALT_FRAME"/>
    <property type="molecule type" value="mRNA"/>
</dbReference>
<dbReference type="CCDS" id="CCDS8325.1"/>
<dbReference type="RefSeq" id="NP_115675.1">
    <property type="nucleotide sequence ID" value="NM_032299.4"/>
</dbReference>
<dbReference type="SMR" id="Q9BTE7"/>
<dbReference type="BioGRID" id="123986">
    <property type="interactions" value="88"/>
</dbReference>
<dbReference type="FunCoup" id="Q9BTE7">
    <property type="interactions" value="1886"/>
</dbReference>
<dbReference type="IntAct" id="Q9BTE7">
    <property type="interactions" value="44"/>
</dbReference>
<dbReference type="MINT" id="Q9BTE7"/>
<dbReference type="STRING" id="9606.ENSP00000260247"/>
<dbReference type="BindingDB" id="Q9BTE7"/>
<dbReference type="ChEMBL" id="CHEMBL4295937"/>
<dbReference type="GlyGen" id="Q9BTE7">
    <property type="glycosylation" value="1 site, 1 O-linked glycan (1 site)"/>
</dbReference>
<dbReference type="iPTMnet" id="Q9BTE7"/>
<dbReference type="MetOSite" id="Q9BTE7"/>
<dbReference type="PhosphoSitePlus" id="Q9BTE7"/>
<dbReference type="BioMuta" id="DCUN1D5"/>
<dbReference type="DMDM" id="74733117"/>
<dbReference type="jPOST" id="Q9BTE7"/>
<dbReference type="MassIVE" id="Q9BTE7"/>
<dbReference type="PaxDb" id="9606-ENSP00000260247"/>
<dbReference type="PeptideAtlas" id="Q9BTE7"/>
<dbReference type="ProteomicsDB" id="78988"/>
<dbReference type="Pumba" id="Q9BTE7"/>
<dbReference type="Antibodypedia" id="45452">
    <property type="antibodies" value="30 antibodies from 16 providers"/>
</dbReference>
<dbReference type="DNASU" id="84259"/>
<dbReference type="Ensembl" id="ENST00000260247.10">
    <property type="protein sequence ID" value="ENSP00000260247.5"/>
    <property type="gene ID" value="ENSG00000137692.12"/>
</dbReference>
<dbReference type="GeneID" id="84259"/>
<dbReference type="KEGG" id="hsa:84259"/>
<dbReference type="MANE-Select" id="ENST00000260247.10">
    <property type="protein sequence ID" value="ENSP00000260247.5"/>
    <property type="RefSeq nucleotide sequence ID" value="NM_032299.4"/>
    <property type="RefSeq protein sequence ID" value="NP_115675.1"/>
</dbReference>
<dbReference type="UCSC" id="uc001phm.4">
    <property type="organism name" value="human"/>
</dbReference>
<dbReference type="AGR" id="HGNC:28409"/>
<dbReference type="CTD" id="84259"/>
<dbReference type="DisGeNET" id="84259"/>
<dbReference type="GeneCards" id="DCUN1D5"/>
<dbReference type="HGNC" id="HGNC:28409">
    <property type="gene designation" value="DCUN1D5"/>
</dbReference>
<dbReference type="HPA" id="ENSG00000137692">
    <property type="expression patterns" value="Low tissue specificity"/>
</dbReference>
<dbReference type="MIM" id="616522">
    <property type="type" value="gene"/>
</dbReference>
<dbReference type="neXtProt" id="NX_Q9BTE7"/>
<dbReference type="OpenTargets" id="ENSG00000137692"/>
<dbReference type="PharmGKB" id="PA142672011"/>
<dbReference type="VEuPathDB" id="HostDB:ENSG00000137692"/>
<dbReference type="eggNOG" id="KOG3077">
    <property type="taxonomic scope" value="Eukaryota"/>
</dbReference>
<dbReference type="GeneTree" id="ENSGT00940000156155"/>
<dbReference type="HOGENOM" id="CLU_047042_3_1_1"/>
<dbReference type="InParanoid" id="Q9BTE7"/>
<dbReference type="OMA" id="HERKCKI"/>
<dbReference type="OrthoDB" id="286637at2759"/>
<dbReference type="PAN-GO" id="Q9BTE7">
    <property type="GO annotations" value="6 GO annotations based on evolutionary models"/>
</dbReference>
<dbReference type="PhylomeDB" id="Q9BTE7"/>
<dbReference type="TreeFam" id="TF354270"/>
<dbReference type="BRENDA" id="2.3.2.32">
    <property type="organism ID" value="2681"/>
</dbReference>
<dbReference type="PathwayCommons" id="Q9BTE7"/>
<dbReference type="Reactome" id="R-HSA-8951664">
    <property type="pathway name" value="Neddylation"/>
</dbReference>
<dbReference type="SignaLink" id="Q9BTE7"/>
<dbReference type="BioGRID-ORCS" id="84259">
    <property type="hits" value="18 hits in 1156 CRISPR screens"/>
</dbReference>
<dbReference type="ChiTaRS" id="DCUN1D5">
    <property type="organism name" value="human"/>
</dbReference>
<dbReference type="GenomeRNAi" id="84259"/>
<dbReference type="Pharos" id="Q9BTE7">
    <property type="development level" value="Tchem"/>
</dbReference>
<dbReference type="PRO" id="PR:Q9BTE7"/>
<dbReference type="Proteomes" id="UP000005640">
    <property type="component" value="Chromosome 11"/>
</dbReference>
<dbReference type="RNAct" id="Q9BTE7">
    <property type="molecule type" value="protein"/>
</dbReference>
<dbReference type="Bgee" id="ENSG00000137692">
    <property type="expression patterns" value="Expressed in secondary oocyte and 182 other cell types or tissues"/>
</dbReference>
<dbReference type="ExpressionAtlas" id="Q9BTE7">
    <property type="expression patterns" value="baseline and differential"/>
</dbReference>
<dbReference type="GO" id="GO:0005737">
    <property type="term" value="C:cytoplasm"/>
    <property type="evidence" value="ECO:0007669"/>
    <property type="project" value="UniProtKB-KW"/>
</dbReference>
<dbReference type="GO" id="GO:0005634">
    <property type="term" value="C:nucleus"/>
    <property type="evidence" value="ECO:0000314"/>
    <property type="project" value="UniProtKB"/>
</dbReference>
<dbReference type="GO" id="GO:0005819">
    <property type="term" value="C:spindle"/>
    <property type="evidence" value="ECO:0000314"/>
    <property type="project" value="UniProtKB"/>
</dbReference>
<dbReference type="GO" id="GO:0000151">
    <property type="term" value="C:ubiquitin ligase complex"/>
    <property type="evidence" value="ECO:0000318"/>
    <property type="project" value="GO_Central"/>
</dbReference>
<dbReference type="GO" id="GO:0097602">
    <property type="term" value="F:cullin family protein binding"/>
    <property type="evidence" value="ECO:0000315"/>
    <property type="project" value="UniProtKB"/>
</dbReference>
<dbReference type="GO" id="GO:0031624">
    <property type="term" value="F:ubiquitin conjugating enzyme binding"/>
    <property type="evidence" value="ECO:0000318"/>
    <property type="project" value="GO_Central"/>
</dbReference>
<dbReference type="GO" id="GO:0032182">
    <property type="term" value="F:ubiquitin-like protein binding"/>
    <property type="evidence" value="ECO:0000318"/>
    <property type="project" value="GO_Central"/>
</dbReference>
<dbReference type="GO" id="GO:0006974">
    <property type="term" value="P:DNA damage response"/>
    <property type="evidence" value="ECO:0000315"/>
    <property type="project" value="UniProtKB"/>
</dbReference>
<dbReference type="GO" id="GO:2000436">
    <property type="term" value="P:positive regulation of protein neddylation"/>
    <property type="evidence" value="ECO:0000315"/>
    <property type="project" value="UniProtKB"/>
</dbReference>
<dbReference type="GO" id="GO:0045116">
    <property type="term" value="P:protein neddylation"/>
    <property type="evidence" value="ECO:0000318"/>
    <property type="project" value="GO_Central"/>
</dbReference>
<dbReference type="GO" id="GO:0001558">
    <property type="term" value="P:regulation of cell growth"/>
    <property type="evidence" value="ECO:0000315"/>
    <property type="project" value="UniProtKB"/>
</dbReference>
<dbReference type="GO" id="GO:2000434">
    <property type="term" value="P:regulation of protein neddylation"/>
    <property type="evidence" value="ECO:0000315"/>
    <property type="project" value="UniProtKB"/>
</dbReference>
<dbReference type="FunFam" id="1.10.238.10:FF:000041">
    <property type="entry name" value="DCN1-like protein"/>
    <property type="match status" value="1"/>
</dbReference>
<dbReference type="FunFam" id="1.10.238.200:FF:000002">
    <property type="entry name" value="DCN1-like protein"/>
    <property type="match status" value="1"/>
</dbReference>
<dbReference type="Gene3D" id="1.10.238.200">
    <property type="entry name" value="Cullin, PONY binding domain"/>
    <property type="match status" value="1"/>
</dbReference>
<dbReference type="Gene3D" id="1.10.238.10">
    <property type="entry name" value="EF-hand"/>
    <property type="match status" value="1"/>
</dbReference>
<dbReference type="InterPro" id="IPR014764">
    <property type="entry name" value="DCN-prot"/>
</dbReference>
<dbReference type="InterPro" id="IPR042460">
    <property type="entry name" value="DCN1-like_PONY"/>
</dbReference>
<dbReference type="InterPro" id="IPR005176">
    <property type="entry name" value="PONY_dom"/>
</dbReference>
<dbReference type="PANTHER" id="PTHR12281:SF6">
    <property type="entry name" value="DCN1-LIKE PROTEIN 5"/>
    <property type="match status" value="1"/>
</dbReference>
<dbReference type="PANTHER" id="PTHR12281">
    <property type="entry name" value="RP42 RELATED"/>
    <property type="match status" value="1"/>
</dbReference>
<dbReference type="Pfam" id="PF03556">
    <property type="entry name" value="Cullin_binding"/>
    <property type="match status" value="1"/>
</dbReference>
<dbReference type="PROSITE" id="PS51229">
    <property type="entry name" value="DCUN1"/>
    <property type="match status" value="1"/>
</dbReference>
<protein>
    <recommendedName>
        <fullName evidence="12">DCN1-like protein 5</fullName>
        <shortName evidence="11">DCNL5</shortName>
    </recommendedName>
    <alternativeName>
        <fullName>DCUN1 domain-containing protein 5</fullName>
    </alternativeName>
    <alternativeName>
        <fullName>Defective in cullin neddylation protein 1-like protein 5</fullName>
    </alternativeName>
    <alternativeName>
        <fullName evidence="10">Squamous cell carcinoma-related oncogene 5</fullName>
    </alternativeName>
</protein>
<evidence type="ECO:0000250" key="1">
    <source>
        <dbReference type="UniProtKB" id="Q9CXV9"/>
    </source>
</evidence>
<evidence type="ECO:0000255" key="2">
    <source>
        <dbReference type="PROSITE-ProRule" id="PRU00574"/>
    </source>
</evidence>
<evidence type="ECO:0000269" key="3">
    <source>
    </source>
</evidence>
<evidence type="ECO:0000269" key="4">
    <source>
    </source>
</evidence>
<evidence type="ECO:0000269" key="5">
    <source>
    </source>
</evidence>
<evidence type="ECO:0000269" key="6">
    <source>
    </source>
</evidence>
<evidence type="ECO:0000269" key="7">
    <source>
    </source>
</evidence>
<evidence type="ECO:0000269" key="8">
    <source>
    </source>
</evidence>
<evidence type="ECO:0000269" key="9">
    <source>
    </source>
</evidence>
<evidence type="ECO:0000303" key="10">
    <source>
    </source>
</evidence>
<evidence type="ECO:0000303" key="11">
    <source>
    </source>
</evidence>
<evidence type="ECO:0000305" key="12"/>
<evidence type="ECO:0000312" key="13">
    <source>
        <dbReference type="HGNC" id="HGNC:28409"/>
    </source>
</evidence>
<evidence type="ECO:0007744" key="14">
    <source>
    </source>
</evidence>
<evidence type="ECO:0007744" key="15">
    <source>
    </source>
</evidence>
<evidence type="ECO:0007744" key="16">
    <source>
    </source>
</evidence>
<reference key="1">
    <citation type="journal article" date="2004" name="Nat. Genet.">
        <title>Complete sequencing and characterization of 21,243 full-length human cDNAs.</title>
        <authorList>
            <person name="Ota T."/>
            <person name="Suzuki Y."/>
            <person name="Nishikawa T."/>
            <person name="Otsuki T."/>
            <person name="Sugiyama T."/>
            <person name="Irie R."/>
            <person name="Wakamatsu A."/>
            <person name="Hayashi K."/>
            <person name="Sato H."/>
            <person name="Nagai K."/>
            <person name="Kimura K."/>
            <person name="Makita H."/>
            <person name="Sekine M."/>
            <person name="Obayashi M."/>
            <person name="Nishi T."/>
            <person name="Shibahara T."/>
            <person name="Tanaka T."/>
            <person name="Ishii S."/>
            <person name="Yamamoto J."/>
            <person name="Saito K."/>
            <person name="Kawai Y."/>
            <person name="Isono Y."/>
            <person name="Nakamura Y."/>
            <person name="Nagahari K."/>
            <person name="Murakami K."/>
            <person name="Yasuda T."/>
            <person name="Iwayanagi T."/>
            <person name="Wagatsuma M."/>
            <person name="Shiratori A."/>
            <person name="Sudo H."/>
            <person name="Hosoiri T."/>
            <person name="Kaku Y."/>
            <person name="Kodaira H."/>
            <person name="Kondo H."/>
            <person name="Sugawara M."/>
            <person name="Takahashi M."/>
            <person name="Kanda K."/>
            <person name="Yokoi T."/>
            <person name="Furuya T."/>
            <person name="Kikkawa E."/>
            <person name="Omura Y."/>
            <person name="Abe K."/>
            <person name="Kamihara K."/>
            <person name="Katsuta N."/>
            <person name="Sato K."/>
            <person name="Tanikawa M."/>
            <person name="Yamazaki M."/>
            <person name="Ninomiya K."/>
            <person name="Ishibashi T."/>
            <person name="Yamashita H."/>
            <person name="Murakawa K."/>
            <person name="Fujimori K."/>
            <person name="Tanai H."/>
            <person name="Kimata M."/>
            <person name="Watanabe M."/>
            <person name="Hiraoka S."/>
            <person name="Chiba Y."/>
            <person name="Ishida S."/>
            <person name="Ono Y."/>
            <person name="Takiguchi S."/>
            <person name="Watanabe S."/>
            <person name="Yosida M."/>
            <person name="Hotuta T."/>
            <person name="Kusano J."/>
            <person name="Kanehori K."/>
            <person name="Takahashi-Fujii A."/>
            <person name="Hara H."/>
            <person name="Tanase T.-O."/>
            <person name="Nomura Y."/>
            <person name="Togiya S."/>
            <person name="Komai F."/>
            <person name="Hara R."/>
            <person name="Takeuchi K."/>
            <person name="Arita M."/>
            <person name="Imose N."/>
            <person name="Musashino K."/>
            <person name="Yuuki H."/>
            <person name="Oshima A."/>
            <person name="Sasaki N."/>
            <person name="Aotsuka S."/>
            <person name="Yoshikawa Y."/>
            <person name="Matsunawa H."/>
            <person name="Ichihara T."/>
            <person name="Shiohata N."/>
            <person name="Sano S."/>
            <person name="Moriya S."/>
            <person name="Momiyama H."/>
            <person name="Satoh N."/>
            <person name="Takami S."/>
            <person name="Terashima Y."/>
            <person name="Suzuki O."/>
            <person name="Nakagawa S."/>
            <person name="Senoh A."/>
            <person name="Mizoguchi H."/>
            <person name="Goto Y."/>
            <person name="Shimizu F."/>
            <person name="Wakebe H."/>
            <person name="Hishigaki H."/>
            <person name="Watanabe T."/>
            <person name="Sugiyama A."/>
            <person name="Takemoto M."/>
            <person name="Kawakami B."/>
            <person name="Yamazaki M."/>
            <person name="Watanabe K."/>
            <person name="Kumagai A."/>
            <person name="Itakura S."/>
            <person name="Fukuzumi Y."/>
            <person name="Fujimori Y."/>
            <person name="Komiyama M."/>
            <person name="Tashiro H."/>
            <person name="Tanigami A."/>
            <person name="Fujiwara T."/>
            <person name="Ono T."/>
            <person name="Yamada K."/>
            <person name="Fujii Y."/>
            <person name="Ozaki K."/>
            <person name="Hirao M."/>
            <person name="Ohmori Y."/>
            <person name="Kawabata A."/>
            <person name="Hikiji T."/>
            <person name="Kobatake N."/>
            <person name="Inagaki H."/>
            <person name="Ikema Y."/>
            <person name="Okamoto S."/>
            <person name="Okitani R."/>
            <person name="Kawakami T."/>
            <person name="Noguchi S."/>
            <person name="Itoh T."/>
            <person name="Shigeta K."/>
            <person name="Senba T."/>
            <person name="Matsumura K."/>
            <person name="Nakajima Y."/>
            <person name="Mizuno T."/>
            <person name="Morinaga M."/>
            <person name="Sasaki M."/>
            <person name="Togashi T."/>
            <person name="Oyama M."/>
            <person name="Hata H."/>
            <person name="Watanabe M."/>
            <person name="Komatsu T."/>
            <person name="Mizushima-Sugano J."/>
            <person name="Satoh T."/>
            <person name="Shirai Y."/>
            <person name="Takahashi Y."/>
            <person name="Nakagawa K."/>
            <person name="Okumura K."/>
            <person name="Nagase T."/>
            <person name="Nomura N."/>
            <person name="Kikuchi H."/>
            <person name="Masuho Y."/>
            <person name="Yamashita R."/>
            <person name="Nakai K."/>
            <person name="Yada T."/>
            <person name="Nakamura Y."/>
            <person name="Ohara O."/>
            <person name="Isogai T."/>
            <person name="Sugano S."/>
        </authorList>
    </citation>
    <scope>NUCLEOTIDE SEQUENCE [LARGE SCALE MRNA]</scope>
    <source>
        <tissue>Skeletal muscle</tissue>
    </source>
</reference>
<reference key="2">
    <citation type="journal article" date="2004" name="Genome Res.">
        <title>The status, quality, and expansion of the NIH full-length cDNA project: the Mammalian Gene Collection (MGC).</title>
        <authorList>
            <consortium name="The MGC Project Team"/>
        </authorList>
    </citation>
    <scope>NUCLEOTIDE SEQUENCE [LARGE SCALE MRNA]</scope>
    <source>
        <tissue>Lung</tissue>
    </source>
</reference>
<reference key="3">
    <citation type="journal article" date="2006" name="BMC Genomics">
        <title>NovelFam3000 -- uncharacterized human protein domains conserved across model organisms.</title>
        <authorList>
            <person name="Kemmer D."/>
            <person name="Podowski R.M."/>
            <person name="Arenillas D."/>
            <person name="Lim J."/>
            <person name="Hodges E."/>
            <person name="Roth P."/>
            <person name="Sonnhammer E.L.L."/>
            <person name="Hoeoeg C."/>
            <person name="Wasserman W.W."/>
        </authorList>
    </citation>
    <scope>NUCLEOTIDE SEQUENCE [MRNA] OF 1-233</scope>
</reference>
<reference key="4">
    <citation type="journal article" date="2008" name="J. Cell Sci.">
        <title>EML3 is a nuclear microtubule-binding protein required for the correct alignment of chromosomes in metaphase.</title>
        <authorList>
            <person name="Tegha-Dunghu J."/>
            <person name="Neumann B."/>
            <person name="Reber S."/>
            <person name="Krause R."/>
            <person name="Erfle H."/>
            <person name="Walter T."/>
            <person name="Held M."/>
            <person name="Rogers P."/>
            <person name="Hupfeld K."/>
            <person name="Ruppert T."/>
            <person name="Ellenberg J."/>
            <person name="Gruss O.J."/>
        </authorList>
    </citation>
    <scope>SUBCELLULAR LOCATION</scope>
</reference>
<reference key="5">
    <citation type="journal article" date="2008" name="Proc. Natl. Acad. Sci. U.S.A.">
        <title>A quantitative atlas of mitotic phosphorylation.</title>
        <authorList>
            <person name="Dephoure N."/>
            <person name="Zhou C."/>
            <person name="Villen J."/>
            <person name="Beausoleil S.A."/>
            <person name="Bakalarski C.E."/>
            <person name="Elledge S.J."/>
            <person name="Gygi S.P."/>
        </authorList>
    </citation>
    <scope>IDENTIFICATION BY MASS SPECTROMETRY [LARGE SCALE ANALYSIS]</scope>
    <source>
        <tissue>Cervix carcinoma</tissue>
    </source>
</reference>
<reference key="6">
    <citation type="journal article" date="2009" name="Proc. Natl. Acad. Sci. U.S.A.">
        <title>The human Dcn1-like protein DCNL3 promotes Cul3 neddylation at membranes.</title>
        <authorList>
            <person name="Meyer-Schaller N."/>
            <person name="Chou Y.C."/>
            <person name="Sumara I."/>
            <person name="Martin D.D."/>
            <person name="Kurz T."/>
            <person name="Katheder N."/>
            <person name="Hofmann K."/>
            <person name="Berthiaume L.G."/>
            <person name="Sicheri F."/>
            <person name="Peter M."/>
        </authorList>
    </citation>
    <scope>FUNCTION</scope>
</reference>
<reference key="7">
    <citation type="journal article" date="2010" name="Sci. Signal.">
        <title>Quantitative phosphoproteomics reveals widespread full phosphorylation site occupancy during mitosis.</title>
        <authorList>
            <person name="Olsen J.V."/>
            <person name="Vermeulen M."/>
            <person name="Santamaria A."/>
            <person name="Kumar C."/>
            <person name="Miller M.L."/>
            <person name="Jensen L.J."/>
            <person name="Gnad F."/>
            <person name="Cox J."/>
            <person name="Jensen T.S."/>
            <person name="Nigg E.A."/>
            <person name="Brunak S."/>
            <person name="Mann M."/>
        </authorList>
    </citation>
    <scope>PHOSPHORYLATION [LARGE SCALE ANALYSIS] AT SER-9</scope>
    <scope>IDENTIFICATION BY MASS SPECTROMETRY [LARGE SCALE ANALYSIS]</scope>
    <source>
        <tissue>Cervix carcinoma</tissue>
    </source>
</reference>
<reference key="8">
    <citation type="journal article" date="2011" name="BMC Syst. Biol.">
        <title>Initial characterization of the human central proteome.</title>
        <authorList>
            <person name="Burkard T.R."/>
            <person name="Planyavsky M."/>
            <person name="Kaupe I."/>
            <person name="Breitwieser F.P."/>
            <person name="Buerckstuemmer T."/>
            <person name="Bennett K.L."/>
            <person name="Superti-Furga G."/>
            <person name="Colinge J."/>
        </authorList>
    </citation>
    <scope>IDENTIFICATION BY MASS SPECTROMETRY [LARGE SCALE ANALYSIS]</scope>
</reference>
<reference key="9">
    <citation type="journal article" date="2011" name="Sci. Signal.">
        <title>System-wide temporal characterization of the proteome and phosphoproteome of human embryonic stem cell differentiation.</title>
        <authorList>
            <person name="Rigbolt K.T."/>
            <person name="Prokhorova T.A."/>
            <person name="Akimov V."/>
            <person name="Henningsen J."/>
            <person name="Johansen P.T."/>
            <person name="Kratchmarova I."/>
            <person name="Kassem M."/>
            <person name="Mann M."/>
            <person name="Olsen J.V."/>
            <person name="Blagoev B."/>
        </authorList>
    </citation>
    <scope>PHOSPHORYLATION [LARGE SCALE ANALYSIS] AT SER-9</scope>
    <scope>IDENTIFICATION BY MASS SPECTROMETRY [LARGE SCALE ANALYSIS]</scope>
</reference>
<reference key="10">
    <citation type="journal article" date="2012" name="Asian Pac. J. Cancer Prev.">
        <title>In vitro biological characterization of DCUN1D5 in DNA damage response.</title>
        <authorList>
            <person name="Guo W."/>
            <person name="Li G.J."/>
            <person name="Xu H.B."/>
            <person name="Xie J.S."/>
            <person name="Shi T.P."/>
            <person name="Zhang S.Z."/>
            <person name="Chen X.H."/>
            <person name="Huang Z.G."/>
        </authorList>
    </citation>
    <scope>SUBCELLULAR LOCATION</scope>
    <scope>INDUCTION</scope>
    <scope>FUNCTION</scope>
</reference>
<reference key="11">
    <citation type="journal article" date="2013" name="J. Proteome Res.">
        <title>Toward a comprehensive characterization of a human cancer cell phosphoproteome.</title>
        <authorList>
            <person name="Zhou H."/>
            <person name="Di Palma S."/>
            <person name="Preisinger C."/>
            <person name="Peng M."/>
            <person name="Polat A.N."/>
            <person name="Heck A.J."/>
            <person name="Mohammed S."/>
        </authorList>
    </citation>
    <scope>PHOSPHORYLATION [LARGE SCALE ANALYSIS] AT SER-9; SER-41 AND SER-48</scope>
    <scope>IDENTIFICATION BY MASS SPECTROMETRY [LARGE SCALE ANALYSIS]</scope>
    <source>
        <tissue>Cervix carcinoma</tissue>
        <tissue>Erythroleukemia</tissue>
    </source>
</reference>
<reference key="12">
    <citation type="journal article" date="2013" name="Structure">
        <title>Structural conservation of distinctive N-terminal acetylation-dependent interactions across a family of mammalian NEDD8 ligation enzymes.</title>
        <authorList>
            <person name="Monda J.K."/>
            <person name="Scott D.C."/>
            <person name="Miller D.J."/>
            <person name="Lydeard J."/>
            <person name="King D."/>
            <person name="Harper J.W."/>
            <person name="Bennett E.J."/>
            <person name="Schulman B.A."/>
        </authorList>
    </citation>
    <scope>DOMAIN</scope>
    <scope>INTERACTION WITH CUL1; CUL2; CUL3; CUL4A; CUL4B; CUL5; UBE2M AND UBE2F</scope>
    <scope>FUNCTION</scope>
</reference>
<reference key="13">
    <citation type="journal article" date="2014" name="Clin. Cancer Res.">
        <title>Oncogenic function of SCCRO5/DCUN1D5 requires its Neddylation E3 activity and nuclear localization.</title>
        <authorList>
            <person name="Bommelje C.C."/>
            <person name="Weeda V.B."/>
            <person name="Huang G."/>
            <person name="Shah K."/>
            <person name="Bains S."/>
            <person name="Buss E."/>
            <person name="Shaha M."/>
            <person name="Goenen M."/>
            <person name="Ghossein R."/>
            <person name="Ramanathan S.Y."/>
            <person name="Singh B."/>
        </authorList>
    </citation>
    <scope>INTERACTION WITH UBE2M; RBX1; CUL1; CUL2; CUL3 AND CAND1</scope>
    <scope>MUTAGENESIS OF ASP-195; ALA-219; ASP-225 AND GLU-226</scope>
    <scope>FUNCTION</scope>
    <scope>DOMAIN</scope>
</reference>
<reference key="14">
    <citation type="journal article" date="2015" name="Proteomics">
        <title>N-terminome analysis of the human mitochondrial proteome.</title>
        <authorList>
            <person name="Vaca Jacome A.S."/>
            <person name="Rabilloud T."/>
            <person name="Schaeffer-Reiss C."/>
            <person name="Rompais M."/>
            <person name="Ayoub D."/>
            <person name="Lane L."/>
            <person name="Bairoch A."/>
            <person name="Van Dorsselaer A."/>
            <person name="Carapito C."/>
        </authorList>
    </citation>
    <scope>IDENTIFICATION BY MASS SPECTROMETRY [LARGE SCALE ANALYSIS]</scope>
</reference>
<reference key="15">
    <citation type="journal article" date="2016" name="J. Cell Sci.">
        <title>Characterization of the mammalian family of DCN-type NEDD8 E3 ligases.</title>
        <authorList>
            <person name="Keuss M.J."/>
            <person name="Thomas Y."/>
            <person name="Mcarthur R."/>
            <person name="Wood N.T."/>
            <person name="Knebel A."/>
            <person name="Kurz T."/>
        </authorList>
    </citation>
    <scope>DOMAIN</scope>
    <scope>INTERACTION WITH CUL1; CUL2; CUL3; CUL4A; CUL4B; CUL5; CAND1; RBX1; RNF7</scope>
    <scope>ELOB AND DDB1</scope>
    <scope>MUTAGENESIS OF 5-LYS--LYS-8; ASP-195; ALA-219 AND ASP-225</scope>
    <scope>TISSUE SPECIFICITY</scope>
    <scope>SUBCELLULAR LOCATION</scope>
    <scope>FUNCTION</scope>
</reference>
<reference key="16">
    <citation type="journal article" date="2018" name="PLoS ONE">
        <title>The NEDD8 E3 ligase DCNL5 is phosphorylated by IKK alpha during Toll-like receptor activation.</title>
        <authorList>
            <person name="Thomas Y."/>
            <person name="Scott D.C."/>
            <person name="Kristariyanto Y.A."/>
            <person name="Rinehart J."/>
            <person name="Clark K."/>
            <person name="Cohen P."/>
            <person name="Kurz T."/>
        </authorList>
    </citation>
    <scope>PHOSPHORYLATION AT SER-41</scope>
    <scope>DOMAIN</scope>
</reference>
<feature type="chain" id="PRO_0000254171" description="DCN1-like protein 5">
    <location>
        <begin position="1"/>
        <end position="237"/>
    </location>
</feature>
<feature type="domain" description="DCUN1" evidence="2">
    <location>
        <begin position="46"/>
        <end position="232"/>
    </location>
</feature>
<feature type="modified residue" description="Phosphoserine" evidence="14 15 16">
    <location>
        <position position="9"/>
    </location>
</feature>
<feature type="modified residue" description="Phosphoserine" evidence="9 16">
    <location>
        <position position="41"/>
    </location>
</feature>
<feature type="modified residue" description="Phosphoserine" evidence="16">
    <location>
        <position position="48"/>
    </location>
</feature>
<feature type="mutagenesis site" description="Affects nucleus localization." evidence="8">
    <original>KKRK</original>
    <variation>AAAA</variation>
    <location>
        <begin position="5"/>
        <end position="8"/>
    </location>
</feature>
<feature type="mutagenesis site" description="Loss of interaction with CUL1, CUL2, CUL3, CUL4A, CUL5, CAND1 and RBX1; when associated with R-219 and A-225. Does not affect localization at nucleus; when associated with R-219 and A-225." evidence="8">
    <original>D</original>
    <variation>A</variation>
    <location>
        <position position="195"/>
    </location>
</feature>
<feature type="mutagenesis site" description="Loss of interaction with RBX1, CUL1 and CAND1." evidence="7">
    <original>D</original>
    <variation>N</variation>
    <location>
        <position position="195"/>
    </location>
</feature>
<feature type="mutagenesis site" description="Loss of interaction with RBX1, CUL1 and CAND1. Loss of interaction with CUL1, CUL2, CUL3, CUL4A, CUL5, CAND1 and RBX1; when associated with A-195 and A-225. Does not affect localization at nucleus; when associated with A-195 and A-225." evidence="7 8">
    <original>A</original>
    <variation>R</variation>
    <location>
        <position position="219"/>
    </location>
</feature>
<feature type="mutagenesis site" description="Loss of interaction with CUL1, CUL2, CUL3, CUL4A, CUL5, CAND1 and RBX1; when associated with A-195 and R-219. Does not affect localization at nucleus; when associated with A-195 and R-219." evidence="8">
    <original>D</original>
    <variation>A</variation>
    <location>
        <position position="225"/>
    </location>
</feature>
<feature type="mutagenesis site" description="Loss of interaction with RBX1, CUL1, CUL2, CUL3 and CAND1. Does not affect interaction with UBE2M and NEDD8. Fails to augment Cul3 neddylation beyond basal levels." evidence="7">
    <original>D</original>
    <variation>N</variation>
    <location>
        <position position="225"/>
    </location>
</feature>
<feature type="mutagenesis site" description="Loss of interaction with RBX1, CUL1, CUL2, CUL3 and CAND1. Does not affect interaction with UBE2M and NEDD8. Fails to augment Cul3 neddylation beyond basal levels." evidence="7">
    <original>E</original>
    <variation>A</variation>
    <location>
        <position position="226"/>
    </location>
</feature>
<feature type="sequence conflict" description="In Ref. 3; AAQ76805." evidence="12" ref="3">
    <original>F</original>
    <variation>L</variation>
    <location>
        <position position="227"/>
    </location>
</feature>
<accession>Q9BTE7</accession>
<accession>Q3ZTT2</accession>
<proteinExistence type="evidence at protein level"/>
<name>DCNL5_HUMAN</name>
<organism>
    <name type="scientific">Homo sapiens</name>
    <name type="common">Human</name>
    <dbReference type="NCBI Taxonomy" id="9606"/>
    <lineage>
        <taxon>Eukaryota</taxon>
        <taxon>Metazoa</taxon>
        <taxon>Chordata</taxon>
        <taxon>Craniata</taxon>
        <taxon>Vertebrata</taxon>
        <taxon>Euteleostomi</taxon>
        <taxon>Mammalia</taxon>
        <taxon>Eutheria</taxon>
        <taxon>Euarchontoglires</taxon>
        <taxon>Primates</taxon>
        <taxon>Haplorrhini</taxon>
        <taxon>Catarrhini</taxon>
        <taxon>Hominidae</taxon>
        <taxon>Homo</taxon>
    </lineage>
</organism>
<keyword id="KW-0963">Cytoplasm</keyword>
<keyword id="KW-0206">Cytoskeleton</keyword>
<keyword id="KW-0539">Nucleus</keyword>
<keyword id="KW-0597">Phosphoprotein</keyword>
<keyword id="KW-1267">Proteomics identification</keyword>
<keyword id="KW-1185">Reference proteome</keyword>
<sequence length="237" mass="27508">MPVKKKRKSPGVAAAVAEDGGLKKCKISSYCRSQPPARLISGEEHFSSKKCLAWFYEYAGPDEVVGPEGMEKFCEDIGVEPENIIMLVLAWKLEAESMGFFTKEEWLKGMTSLQCDCTEKLQNKFDFLRSQLNDISSFKNIYRYAFDFARDKDQRSLDIDTAKSMLALLLGRTWPLFSVFYQYLEQSKYRVMNKDQWYNVLEFSRTVHADLSNYDEDGAWPVLLDEFVEWQKVRQTS</sequence>
<gene>
    <name evidence="13" type="primary">DCUN1D5</name>
    <name evidence="10" type="synonym">SCCRO5</name>
</gene>